<reference key="1">
    <citation type="submission" date="2009-01" db="EMBL/GenBank/DDBJ databases">
        <title>Complete sequence of chromosome of Caldicellulosiruptor becscii DSM 6725.</title>
        <authorList>
            <person name="Lucas S."/>
            <person name="Copeland A."/>
            <person name="Lapidus A."/>
            <person name="Glavina del Rio T."/>
            <person name="Tice H."/>
            <person name="Bruce D."/>
            <person name="Goodwin L."/>
            <person name="Pitluck S."/>
            <person name="Sims D."/>
            <person name="Meincke L."/>
            <person name="Brettin T."/>
            <person name="Detter J.C."/>
            <person name="Han C."/>
            <person name="Larimer F."/>
            <person name="Land M."/>
            <person name="Hauser L."/>
            <person name="Kyrpides N."/>
            <person name="Ovchinnikova G."/>
            <person name="Kataeva I."/>
            <person name="Adams M.W.W."/>
        </authorList>
    </citation>
    <scope>NUCLEOTIDE SEQUENCE [LARGE SCALE GENOMIC DNA]</scope>
    <source>
        <strain>ATCC BAA-1888 / DSM 6725 / KCTC 15123 / Z-1320</strain>
    </source>
</reference>
<evidence type="ECO:0000255" key="1">
    <source>
        <dbReference type="HAMAP-Rule" id="MF_00484"/>
    </source>
</evidence>
<dbReference type="EC" id="2.4.1.21" evidence="1"/>
<dbReference type="EMBL" id="CP001393">
    <property type="protein sequence ID" value="ACM59681.1"/>
    <property type="molecule type" value="Genomic_DNA"/>
</dbReference>
<dbReference type="RefSeq" id="WP_015907136.1">
    <property type="nucleotide sequence ID" value="NC_012034.1"/>
</dbReference>
<dbReference type="SMR" id="B9MPC0"/>
<dbReference type="STRING" id="521460.Athe_0555"/>
<dbReference type="CAZy" id="GT5">
    <property type="family name" value="Glycosyltransferase Family 5"/>
</dbReference>
<dbReference type="GeneID" id="31771910"/>
<dbReference type="KEGG" id="ate:Athe_0555"/>
<dbReference type="eggNOG" id="COG0297">
    <property type="taxonomic scope" value="Bacteria"/>
</dbReference>
<dbReference type="HOGENOM" id="CLU_009583_18_2_9"/>
<dbReference type="UniPathway" id="UPA00164"/>
<dbReference type="Proteomes" id="UP000007723">
    <property type="component" value="Chromosome"/>
</dbReference>
<dbReference type="GO" id="GO:0009011">
    <property type="term" value="F:alpha-1,4-glucan glucosyltransferase (ADP-glucose donor) activity"/>
    <property type="evidence" value="ECO:0007669"/>
    <property type="project" value="UniProtKB-UniRule"/>
</dbReference>
<dbReference type="GO" id="GO:0004373">
    <property type="term" value="F:alpha-1,4-glucan glucosyltransferase (UDP-glucose donor) activity"/>
    <property type="evidence" value="ECO:0007669"/>
    <property type="project" value="InterPro"/>
</dbReference>
<dbReference type="GO" id="GO:0005978">
    <property type="term" value="P:glycogen biosynthetic process"/>
    <property type="evidence" value="ECO:0007669"/>
    <property type="project" value="UniProtKB-UniRule"/>
</dbReference>
<dbReference type="CDD" id="cd03791">
    <property type="entry name" value="GT5_Glycogen_synthase_DULL1-like"/>
    <property type="match status" value="1"/>
</dbReference>
<dbReference type="Gene3D" id="3.40.50.2000">
    <property type="entry name" value="Glycogen Phosphorylase B"/>
    <property type="match status" value="2"/>
</dbReference>
<dbReference type="HAMAP" id="MF_00484">
    <property type="entry name" value="Glycogen_synth"/>
    <property type="match status" value="1"/>
</dbReference>
<dbReference type="InterPro" id="IPR001296">
    <property type="entry name" value="Glyco_trans_1"/>
</dbReference>
<dbReference type="InterPro" id="IPR011835">
    <property type="entry name" value="GS/SS"/>
</dbReference>
<dbReference type="InterPro" id="IPR013534">
    <property type="entry name" value="Starch_synth_cat_dom"/>
</dbReference>
<dbReference type="NCBIfam" id="TIGR02095">
    <property type="entry name" value="glgA"/>
    <property type="match status" value="1"/>
</dbReference>
<dbReference type="NCBIfam" id="NF001898">
    <property type="entry name" value="PRK00654.1-1"/>
    <property type="match status" value="1"/>
</dbReference>
<dbReference type="PANTHER" id="PTHR45825:SF11">
    <property type="entry name" value="ALPHA AMYLASE DOMAIN-CONTAINING PROTEIN"/>
    <property type="match status" value="1"/>
</dbReference>
<dbReference type="PANTHER" id="PTHR45825">
    <property type="entry name" value="GRANULE-BOUND STARCH SYNTHASE 1, CHLOROPLASTIC/AMYLOPLASTIC"/>
    <property type="match status" value="1"/>
</dbReference>
<dbReference type="Pfam" id="PF08323">
    <property type="entry name" value="Glyco_transf_5"/>
    <property type="match status" value="1"/>
</dbReference>
<dbReference type="Pfam" id="PF00534">
    <property type="entry name" value="Glycos_transf_1"/>
    <property type="match status" value="1"/>
</dbReference>
<dbReference type="SUPFAM" id="SSF53756">
    <property type="entry name" value="UDP-Glycosyltransferase/glycogen phosphorylase"/>
    <property type="match status" value="1"/>
</dbReference>
<gene>
    <name evidence="1" type="primary">glgA</name>
    <name type="ordered locus">Athe_0555</name>
</gene>
<feature type="chain" id="PRO_1000135644" description="Glycogen synthase">
    <location>
        <begin position="1"/>
        <end position="478"/>
    </location>
</feature>
<feature type="binding site" evidence="1">
    <location>
        <position position="15"/>
    </location>
    <ligand>
        <name>ADP-alpha-D-glucose</name>
        <dbReference type="ChEBI" id="CHEBI:57498"/>
    </ligand>
</feature>
<sequence length="478" mass="54751">MKILFAVSEAFPFAKSGGLADVAYSLPKALRNLGVDIRVIMPKYSDIHPDFTTKMKHICHFTVPVGWRNQYCGIEYLNLDGVPFYFVDNEYYFKRPGYYGYYDDGERFSFFSRAVCEAVYHLDFDVDIIHVNDWHTSVIPVLLKAHYGHSDKHNKIKTILTIHNLKYQGIFPKEVMYDLLSLPDEYFSEDKLKFYDAISFLKGGIIYSDKVVTVSRTYANEVRTLSYGEGLHGLLSGIGEKLIGIINGIDYEVYNPATDKLIFVNYDSNTFENRKKENKFRLQQMLNLPVSDEIVLIGMVSRLTKEKGIELIERIINKLLTLPVQLVILGAGDYHYEQMLKQYAGAFPSKVSANICYSEELARKIYAGSDMYLMPSLTEPCGISQLIAMRYGSVPIVRETGGLKDTVKPYNQFTGEGWGFSFANYDPAELFATIKYALSIYNDKNQWRNIVHQAMTQDNSWNASAYEYQKVYESLLNS</sequence>
<organism>
    <name type="scientific">Caldicellulosiruptor bescii (strain ATCC BAA-1888 / DSM 6725 / KCTC 15123 / Z-1320)</name>
    <name type="common">Anaerocellum thermophilum</name>
    <dbReference type="NCBI Taxonomy" id="521460"/>
    <lineage>
        <taxon>Bacteria</taxon>
        <taxon>Bacillati</taxon>
        <taxon>Bacillota</taxon>
        <taxon>Bacillota incertae sedis</taxon>
        <taxon>Caldicellulosiruptorales</taxon>
        <taxon>Caldicellulosiruptoraceae</taxon>
        <taxon>Caldicellulosiruptor</taxon>
    </lineage>
</organism>
<protein>
    <recommendedName>
        <fullName evidence="1">Glycogen synthase</fullName>
        <ecNumber evidence="1">2.4.1.21</ecNumber>
    </recommendedName>
    <alternativeName>
        <fullName evidence="1">Starch [bacterial glycogen] synthase</fullName>
    </alternativeName>
</protein>
<name>GLGA_CALBD</name>
<keyword id="KW-0320">Glycogen biosynthesis</keyword>
<keyword id="KW-0328">Glycosyltransferase</keyword>
<keyword id="KW-0808">Transferase</keyword>
<proteinExistence type="inferred from homology"/>
<comment type="function">
    <text evidence="1">Synthesizes alpha-1,4-glucan chains using ADP-glucose.</text>
</comment>
<comment type="catalytic activity">
    <reaction evidence="1">
        <text>[(1-&gt;4)-alpha-D-glucosyl](n) + ADP-alpha-D-glucose = [(1-&gt;4)-alpha-D-glucosyl](n+1) + ADP + H(+)</text>
        <dbReference type="Rhea" id="RHEA:18189"/>
        <dbReference type="Rhea" id="RHEA-COMP:9584"/>
        <dbReference type="Rhea" id="RHEA-COMP:9587"/>
        <dbReference type="ChEBI" id="CHEBI:15378"/>
        <dbReference type="ChEBI" id="CHEBI:15444"/>
        <dbReference type="ChEBI" id="CHEBI:57498"/>
        <dbReference type="ChEBI" id="CHEBI:456216"/>
        <dbReference type="EC" id="2.4.1.21"/>
    </reaction>
</comment>
<comment type="pathway">
    <text evidence="1">Glycan biosynthesis; glycogen biosynthesis.</text>
</comment>
<comment type="similarity">
    <text evidence="1">Belongs to the glycosyltransferase 1 family. Bacterial/plant glycogen synthase subfamily.</text>
</comment>
<accession>B9MPC0</accession>